<sequence length="436" mass="48096">MSATTQEKGLNYKVKDLSQAEWGRQEIILAEKEMPGLMALRQEYKGKKPLAGARIAGSLHMTIQTAVLIETLTELGAEVRWSSCNIFSTQDHAAAAIAKAGVPVFAWKGETEEEYWWCIEQTLFFGDKGPNMILDDGGDLTAYVHEKYPKLLSEIRGISEETTTGVKSLYKLLKKGELKVPAFNVNDSVTKSKFDNLYGCRESLADGIKRATDVMLAGKVALVCGFGDVGKGSAASLRNFGARVIVTEIDPICALQASMEGYQVLRVEDIIEQVDIVVTATGNDDIITLEHMKAMKDGAILCNIGHFDTEIQMSRLNSEKGVTKKEIKPQVDKYTFPDGKSIVVLAEGRLVNLGCATGHPSFVMSCSFTNQVLAQIELYNNKYELGVYTLPKHLDEKVAALHLEQLGVRLTKLNQKQADYLGVPLNGPFKPENYRY</sequence>
<feature type="chain" id="PRO_1000024729" description="Adenosylhomocysteinase">
    <location>
        <begin position="1"/>
        <end position="436"/>
    </location>
</feature>
<feature type="binding site" evidence="1">
    <location>
        <position position="62"/>
    </location>
    <ligand>
        <name>substrate</name>
    </ligand>
</feature>
<feature type="binding site" evidence="1">
    <location>
        <position position="136"/>
    </location>
    <ligand>
        <name>substrate</name>
    </ligand>
</feature>
<feature type="binding site" evidence="1">
    <location>
        <position position="161"/>
    </location>
    <ligand>
        <name>substrate</name>
    </ligand>
</feature>
<feature type="binding site" evidence="1">
    <location>
        <begin position="162"/>
        <end position="164"/>
    </location>
    <ligand>
        <name>NAD(+)</name>
        <dbReference type="ChEBI" id="CHEBI:57540"/>
    </ligand>
</feature>
<feature type="binding site" evidence="1">
    <location>
        <position position="191"/>
    </location>
    <ligand>
        <name>substrate</name>
    </ligand>
</feature>
<feature type="binding site" evidence="1">
    <location>
        <position position="195"/>
    </location>
    <ligand>
        <name>substrate</name>
    </ligand>
</feature>
<feature type="binding site" evidence="1">
    <location>
        <position position="196"/>
    </location>
    <ligand>
        <name>NAD(+)</name>
        <dbReference type="ChEBI" id="CHEBI:57540"/>
    </ligand>
</feature>
<feature type="binding site" evidence="1">
    <location>
        <begin position="225"/>
        <end position="230"/>
    </location>
    <ligand>
        <name>NAD(+)</name>
        <dbReference type="ChEBI" id="CHEBI:57540"/>
    </ligand>
</feature>
<feature type="binding site" evidence="1">
    <location>
        <position position="248"/>
    </location>
    <ligand>
        <name>NAD(+)</name>
        <dbReference type="ChEBI" id="CHEBI:57540"/>
    </ligand>
</feature>
<feature type="binding site" evidence="1">
    <location>
        <position position="283"/>
    </location>
    <ligand>
        <name>NAD(+)</name>
        <dbReference type="ChEBI" id="CHEBI:57540"/>
    </ligand>
</feature>
<feature type="binding site" evidence="1">
    <location>
        <begin position="304"/>
        <end position="306"/>
    </location>
    <ligand>
        <name>NAD(+)</name>
        <dbReference type="ChEBI" id="CHEBI:57540"/>
    </ligand>
</feature>
<feature type="binding site" evidence="1">
    <location>
        <position position="352"/>
    </location>
    <ligand>
        <name>NAD(+)</name>
        <dbReference type="ChEBI" id="CHEBI:57540"/>
    </ligand>
</feature>
<accession>Q04NN6</accession>
<gene>
    <name evidence="1" type="primary">ahcY</name>
    <name type="ordered locus">LBJ_4089</name>
</gene>
<dbReference type="EC" id="3.13.2.1" evidence="1"/>
<dbReference type="EMBL" id="CP000351">
    <property type="protein sequence ID" value="ABJ77484.1"/>
    <property type="molecule type" value="Genomic_DNA"/>
</dbReference>
<dbReference type="RefSeq" id="WP_002756526.1">
    <property type="nucleotide sequence ID" value="NC_008511.1"/>
</dbReference>
<dbReference type="SMR" id="Q04NN6"/>
<dbReference type="KEGG" id="lbj:LBJ_4089"/>
<dbReference type="HOGENOM" id="CLU_025194_2_1_12"/>
<dbReference type="UniPathway" id="UPA00314">
    <property type="reaction ID" value="UER00076"/>
</dbReference>
<dbReference type="Proteomes" id="UP000000656">
    <property type="component" value="Chromosome 2"/>
</dbReference>
<dbReference type="GO" id="GO:0005829">
    <property type="term" value="C:cytosol"/>
    <property type="evidence" value="ECO:0007669"/>
    <property type="project" value="TreeGrafter"/>
</dbReference>
<dbReference type="GO" id="GO:0004013">
    <property type="term" value="F:adenosylhomocysteinase activity"/>
    <property type="evidence" value="ECO:0007669"/>
    <property type="project" value="UniProtKB-UniRule"/>
</dbReference>
<dbReference type="GO" id="GO:0071269">
    <property type="term" value="P:L-homocysteine biosynthetic process"/>
    <property type="evidence" value="ECO:0007669"/>
    <property type="project" value="UniProtKB-UniRule"/>
</dbReference>
<dbReference type="GO" id="GO:0006730">
    <property type="term" value="P:one-carbon metabolic process"/>
    <property type="evidence" value="ECO:0007669"/>
    <property type="project" value="UniProtKB-KW"/>
</dbReference>
<dbReference type="GO" id="GO:0033353">
    <property type="term" value="P:S-adenosylmethionine cycle"/>
    <property type="evidence" value="ECO:0007669"/>
    <property type="project" value="TreeGrafter"/>
</dbReference>
<dbReference type="CDD" id="cd00401">
    <property type="entry name" value="SAHH"/>
    <property type="match status" value="1"/>
</dbReference>
<dbReference type="FunFam" id="3.40.50.1480:FF:000004">
    <property type="entry name" value="Adenosylhomocysteinase"/>
    <property type="match status" value="1"/>
</dbReference>
<dbReference type="FunFam" id="3.40.50.720:FF:000004">
    <property type="entry name" value="Adenosylhomocysteinase"/>
    <property type="match status" value="1"/>
</dbReference>
<dbReference type="Gene3D" id="3.40.50.1480">
    <property type="entry name" value="Adenosylhomocysteinase-like"/>
    <property type="match status" value="3"/>
</dbReference>
<dbReference type="Gene3D" id="3.40.50.720">
    <property type="entry name" value="NAD(P)-binding Rossmann-like Domain"/>
    <property type="match status" value="1"/>
</dbReference>
<dbReference type="HAMAP" id="MF_00563">
    <property type="entry name" value="AdoHcyase"/>
    <property type="match status" value="1"/>
</dbReference>
<dbReference type="InterPro" id="IPR042172">
    <property type="entry name" value="Adenosylhomocyst_ase-like_sf"/>
</dbReference>
<dbReference type="InterPro" id="IPR000043">
    <property type="entry name" value="Adenosylhomocysteinase-like"/>
</dbReference>
<dbReference type="InterPro" id="IPR015878">
    <property type="entry name" value="Ado_hCys_hydrolase_NAD-bd"/>
</dbReference>
<dbReference type="InterPro" id="IPR036291">
    <property type="entry name" value="NAD(P)-bd_dom_sf"/>
</dbReference>
<dbReference type="InterPro" id="IPR020082">
    <property type="entry name" value="S-Ado-L-homoCys_hydrolase_CS"/>
</dbReference>
<dbReference type="NCBIfam" id="TIGR00936">
    <property type="entry name" value="ahcY"/>
    <property type="match status" value="1"/>
</dbReference>
<dbReference type="NCBIfam" id="NF004005">
    <property type="entry name" value="PRK05476.2-3"/>
    <property type="match status" value="1"/>
</dbReference>
<dbReference type="PANTHER" id="PTHR23420">
    <property type="entry name" value="ADENOSYLHOMOCYSTEINASE"/>
    <property type="match status" value="1"/>
</dbReference>
<dbReference type="PANTHER" id="PTHR23420:SF0">
    <property type="entry name" value="ADENOSYLHOMOCYSTEINASE"/>
    <property type="match status" value="1"/>
</dbReference>
<dbReference type="Pfam" id="PF05221">
    <property type="entry name" value="AdoHcyase"/>
    <property type="match status" value="1"/>
</dbReference>
<dbReference type="Pfam" id="PF00670">
    <property type="entry name" value="AdoHcyase_NAD"/>
    <property type="match status" value="1"/>
</dbReference>
<dbReference type="PIRSF" id="PIRSF001109">
    <property type="entry name" value="Ad_hcy_hydrolase"/>
    <property type="match status" value="1"/>
</dbReference>
<dbReference type="SMART" id="SM00996">
    <property type="entry name" value="AdoHcyase"/>
    <property type="match status" value="1"/>
</dbReference>
<dbReference type="SMART" id="SM00997">
    <property type="entry name" value="AdoHcyase_NAD"/>
    <property type="match status" value="1"/>
</dbReference>
<dbReference type="SUPFAM" id="SSF52283">
    <property type="entry name" value="Formate/glycerate dehydrogenase catalytic domain-like"/>
    <property type="match status" value="1"/>
</dbReference>
<dbReference type="SUPFAM" id="SSF51735">
    <property type="entry name" value="NAD(P)-binding Rossmann-fold domains"/>
    <property type="match status" value="1"/>
</dbReference>
<dbReference type="PROSITE" id="PS00738">
    <property type="entry name" value="ADOHCYASE_1"/>
    <property type="match status" value="1"/>
</dbReference>
<dbReference type="PROSITE" id="PS00739">
    <property type="entry name" value="ADOHCYASE_2"/>
    <property type="match status" value="1"/>
</dbReference>
<organism>
    <name type="scientific">Leptospira borgpetersenii serovar Hardjo-bovis (strain JB197)</name>
    <dbReference type="NCBI Taxonomy" id="355277"/>
    <lineage>
        <taxon>Bacteria</taxon>
        <taxon>Pseudomonadati</taxon>
        <taxon>Spirochaetota</taxon>
        <taxon>Spirochaetia</taxon>
        <taxon>Leptospirales</taxon>
        <taxon>Leptospiraceae</taxon>
        <taxon>Leptospira</taxon>
    </lineage>
</organism>
<reference key="1">
    <citation type="journal article" date="2006" name="Proc. Natl. Acad. Sci. U.S.A.">
        <title>Genome reduction in Leptospira borgpetersenii reflects limited transmission potential.</title>
        <authorList>
            <person name="Bulach D.M."/>
            <person name="Zuerner R.L."/>
            <person name="Wilson P."/>
            <person name="Seemann T."/>
            <person name="McGrath A."/>
            <person name="Cullen P.A."/>
            <person name="Davis J."/>
            <person name="Johnson M."/>
            <person name="Kuczek E."/>
            <person name="Alt D.P."/>
            <person name="Peterson-Burch B."/>
            <person name="Coppel R.L."/>
            <person name="Rood J.I."/>
            <person name="Davies J.K."/>
            <person name="Adler B."/>
        </authorList>
    </citation>
    <scope>NUCLEOTIDE SEQUENCE [LARGE SCALE GENOMIC DNA]</scope>
    <source>
        <strain>JB197</strain>
    </source>
</reference>
<name>SAHH_LEPBJ</name>
<comment type="function">
    <text evidence="1">May play a key role in the regulation of the intracellular concentration of adenosylhomocysteine.</text>
</comment>
<comment type="catalytic activity">
    <reaction evidence="1">
        <text>S-adenosyl-L-homocysteine + H2O = L-homocysteine + adenosine</text>
        <dbReference type="Rhea" id="RHEA:21708"/>
        <dbReference type="ChEBI" id="CHEBI:15377"/>
        <dbReference type="ChEBI" id="CHEBI:16335"/>
        <dbReference type="ChEBI" id="CHEBI:57856"/>
        <dbReference type="ChEBI" id="CHEBI:58199"/>
        <dbReference type="EC" id="3.13.2.1"/>
    </reaction>
</comment>
<comment type="cofactor">
    <cofactor evidence="1">
        <name>NAD(+)</name>
        <dbReference type="ChEBI" id="CHEBI:57540"/>
    </cofactor>
    <text evidence="1">Binds 1 NAD(+) per subunit.</text>
</comment>
<comment type="pathway">
    <text evidence="1">Amino-acid biosynthesis; L-homocysteine biosynthesis; L-homocysteine from S-adenosyl-L-homocysteine: step 1/1.</text>
</comment>
<comment type="subcellular location">
    <subcellularLocation>
        <location evidence="1">Cytoplasm</location>
    </subcellularLocation>
</comment>
<comment type="similarity">
    <text evidence="1">Belongs to the adenosylhomocysteinase family.</text>
</comment>
<keyword id="KW-0963">Cytoplasm</keyword>
<keyword id="KW-0378">Hydrolase</keyword>
<keyword id="KW-0520">NAD</keyword>
<keyword id="KW-0554">One-carbon metabolism</keyword>
<proteinExistence type="inferred from homology"/>
<protein>
    <recommendedName>
        <fullName evidence="1">Adenosylhomocysteinase</fullName>
        <ecNumber evidence="1">3.13.2.1</ecNumber>
    </recommendedName>
    <alternativeName>
        <fullName evidence="1">S-adenosyl-L-homocysteine hydrolase</fullName>
        <shortName evidence="1">AdoHcyase</shortName>
    </alternativeName>
</protein>
<evidence type="ECO:0000255" key="1">
    <source>
        <dbReference type="HAMAP-Rule" id="MF_00563"/>
    </source>
</evidence>